<reference key="1">
    <citation type="journal article" date="2005" name="Science">
        <title>Genome streamlining in a cosmopolitan oceanic bacterium.</title>
        <authorList>
            <person name="Giovannoni S.J."/>
            <person name="Tripp H.J."/>
            <person name="Givan S."/>
            <person name="Podar M."/>
            <person name="Vergin K.L."/>
            <person name="Baptista D."/>
            <person name="Bibbs L."/>
            <person name="Eads J."/>
            <person name="Richardson T.H."/>
            <person name="Noordewier M."/>
            <person name="Rappe M.S."/>
            <person name="Short J.M."/>
            <person name="Carrington J.C."/>
            <person name="Mathur E.J."/>
        </authorList>
    </citation>
    <scope>NUCLEOTIDE SEQUENCE [LARGE SCALE GENOMIC DNA]</scope>
    <source>
        <strain>HTCC1062</strain>
    </source>
</reference>
<name>DNLJ_PELUB</name>
<organism>
    <name type="scientific">Pelagibacter ubique (strain HTCC1062)</name>
    <dbReference type="NCBI Taxonomy" id="335992"/>
    <lineage>
        <taxon>Bacteria</taxon>
        <taxon>Pseudomonadati</taxon>
        <taxon>Pseudomonadota</taxon>
        <taxon>Alphaproteobacteria</taxon>
        <taxon>Candidatus Pelagibacterales</taxon>
        <taxon>Candidatus Pelagibacteraceae</taxon>
        <taxon>Candidatus Pelagibacter</taxon>
    </lineage>
</organism>
<feature type="chain" id="PRO_0000313355" description="DNA ligase">
    <location>
        <begin position="1"/>
        <end position="676"/>
    </location>
</feature>
<feature type="domain" description="BRCT" evidence="1">
    <location>
        <begin position="595"/>
        <end position="676"/>
    </location>
</feature>
<feature type="active site" description="N6-AMP-lysine intermediate" evidence="1">
    <location>
        <position position="119"/>
    </location>
</feature>
<feature type="binding site" evidence="1">
    <location>
        <begin position="34"/>
        <end position="38"/>
    </location>
    <ligand>
        <name>NAD(+)</name>
        <dbReference type="ChEBI" id="CHEBI:57540"/>
    </ligand>
</feature>
<feature type="binding site" evidence="1">
    <location>
        <begin position="83"/>
        <end position="84"/>
    </location>
    <ligand>
        <name>NAD(+)</name>
        <dbReference type="ChEBI" id="CHEBI:57540"/>
    </ligand>
</feature>
<feature type="binding site" evidence="1">
    <location>
        <position position="117"/>
    </location>
    <ligand>
        <name>NAD(+)</name>
        <dbReference type="ChEBI" id="CHEBI:57540"/>
    </ligand>
</feature>
<feature type="binding site" evidence="1">
    <location>
        <position position="140"/>
    </location>
    <ligand>
        <name>NAD(+)</name>
        <dbReference type="ChEBI" id="CHEBI:57540"/>
    </ligand>
</feature>
<feature type="binding site" evidence="1">
    <location>
        <position position="177"/>
    </location>
    <ligand>
        <name>NAD(+)</name>
        <dbReference type="ChEBI" id="CHEBI:57540"/>
    </ligand>
</feature>
<feature type="binding site" evidence="1">
    <location>
        <position position="285"/>
    </location>
    <ligand>
        <name>NAD(+)</name>
        <dbReference type="ChEBI" id="CHEBI:57540"/>
    </ligand>
</feature>
<feature type="binding site" evidence="1">
    <location>
        <position position="309"/>
    </location>
    <ligand>
        <name>NAD(+)</name>
        <dbReference type="ChEBI" id="CHEBI:57540"/>
    </ligand>
</feature>
<feature type="binding site" evidence="1">
    <location>
        <position position="403"/>
    </location>
    <ligand>
        <name>Zn(2+)</name>
        <dbReference type="ChEBI" id="CHEBI:29105"/>
    </ligand>
</feature>
<feature type="binding site" evidence="1">
    <location>
        <position position="406"/>
    </location>
    <ligand>
        <name>Zn(2+)</name>
        <dbReference type="ChEBI" id="CHEBI:29105"/>
    </ligand>
</feature>
<feature type="binding site" evidence="1">
    <location>
        <position position="427"/>
    </location>
    <ligand>
        <name>Zn(2+)</name>
        <dbReference type="ChEBI" id="CHEBI:29105"/>
    </ligand>
</feature>
<feature type="binding site" evidence="1">
    <location>
        <position position="434"/>
    </location>
    <ligand>
        <name>Zn(2+)</name>
        <dbReference type="ChEBI" id="CHEBI:29105"/>
    </ligand>
</feature>
<evidence type="ECO:0000255" key="1">
    <source>
        <dbReference type="HAMAP-Rule" id="MF_01588"/>
    </source>
</evidence>
<sequence>MNDKDLEIEYLKKIDLFQRHNKHYYDKNKPIVSDQEFDLLKKDIIDLERKYKFLKSEYSPTKSIGFKPSKNFQKIKHKVPMLSLGNAFNEEDLKNFEKKIINFLSLKDVNTIEYSAEPKIDGISASLIYIDGKLTKGLSRGDGNEGEDITQNLKTIKDIPLEITKSNFPKEIDIRGEVFIENNDFKKIKDKFANPRNAASGSLRQKNSLITAKIPLKFIAYTYGYEKKMNIKNQTSFLENLKLWGFKTNPFNKKIIGVKNLMLNHKELEEKRKELAFDIDGIVYKVNDFDLQKRLGFAANAPRWAIAHKFSANSSISEIMNIEIQIGRTGALTPVAKIKPVNIGGVIVSNATLHNEDEIVRKDIRVGDTVTVERAGDVIPHVVSVDLKKRKQNSKKFIFPLKCPSCGSKTIKDYNETTKRQDAVRRCASEGFECEKIAIERIKHFVSKDAFNIDGFGKKIVENFWNLKLVRLPQDIFKLNYNKIEELEGWGKLSVANLRFSIEEKKNISLERFIYSLGIRHIGQENAKLIARHLKTASNFFRLSGEKNIESLSNIDGIGITQIQSIKKFFLNKTNLKVLSELEKNLLIKDVILINNNGLLKNKTFMLTGKLNGISRAEAKSLIEQNSGKIISNVNKKLDYLIAGDKPTLKKINTAKEWNIKIINQTEWLKMLNKSG</sequence>
<dbReference type="EC" id="6.5.1.2" evidence="1"/>
<dbReference type="EMBL" id="CP000084">
    <property type="protein sequence ID" value="AAZ20841.1"/>
    <property type="molecule type" value="Genomic_DNA"/>
</dbReference>
<dbReference type="RefSeq" id="WP_011281412.1">
    <property type="nucleotide sequence ID" value="NC_007205.1"/>
</dbReference>
<dbReference type="SMR" id="Q4FPL3"/>
<dbReference type="STRING" id="335992.SAR11_0016"/>
<dbReference type="GeneID" id="66294519"/>
<dbReference type="KEGG" id="pub:SAR11_0016"/>
<dbReference type="eggNOG" id="COG0272">
    <property type="taxonomic scope" value="Bacteria"/>
</dbReference>
<dbReference type="HOGENOM" id="CLU_007764_2_1_5"/>
<dbReference type="OrthoDB" id="9759736at2"/>
<dbReference type="Proteomes" id="UP000002528">
    <property type="component" value="Chromosome"/>
</dbReference>
<dbReference type="GO" id="GO:0005829">
    <property type="term" value="C:cytosol"/>
    <property type="evidence" value="ECO:0007669"/>
    <property type="project" value="TreeGrafter"/>
</dbReference>
<dbReference type="GO" id="GO:0003911">
    <property type="term" value="F:DNA ligase (NAD+) activity"/>
    <property type="evidence" value="ECO:0007669"/>
    <property type="project" value="UniProtKB-UniRule"/>
</dbReference>
<dbReference type="GO" id="GO:0046872">
    <property type="term" value="F:metal ion binding"/>
    <property type="evidence" value="ECO:0007669"/>
    <property type="project" value="UniProtKB-KW"/>
</dbReference>
<dbReference type="GO" id="GO:0006281">
    <property type="term" value="P:DNA repair"/>
    <property type="evidence" value="ECO:0007669"/>
    <property type="project" value="UniProtKB-KW"/>
</dbReference>
<dbReference type="GO" id="GO:0006260">
    <property type="term" value="P:DNA replication"/>
    <property type="evidence" value="ECO:0007669"/>
    <property type="project" value="UniProtKB-KW"/>
</dbReference>
<dbReference type="CDD" id="cd17748">
    <property type="entry name" value="BRCT_DNA_ligase_like"/>
    <property type="match status" value="1"/>
</dbReference>
<dbReference type="CDD" id="cd00114">
    <property type="entry name" value="LIGANc"/>
    <property type="match status" value="1"/>
</dbReference>
<dbReference type="FunFam" id="2.40.50.140:FF:000012">
    <property type="entry name" value="DNA ligase"/>
    <property type="match status" value="1"/>
</dbReference>
<dbReference type="Gene3D" id="6.20.10.30">
    <property type="match status" value="1"/>
</dbReference>
<dbReference type="Gene3D" id="1.10.150.20">
    <property type="entry name" value="5' to 3' exonuclease, C-terminal subdomain"/>
    <property type="match status" value="2"/>
</dbReference>
<dbReference type="Gene3D" id="3.40.50.10190">
    <property type="entry name" value="BRCT domain"/>
    <property type="match status" value="1"/>
</dbReference>
<dbReference type="Gene3D" id="3.30.470.30">
    <property type="entry name" value="DNA ligase/mRNA capping enzyme"/>
    <property type="match status" value="1"/>
</dbReference>
<dbReference type="Gene3D" id="1.10.287.610">
    <property type="entry name" value="Helix hairpin bin"/>
    <property type="match status" value="1"/>
</dbReference>
<dbReference type="Gene3D" id="2.40.50.140">
    <property type="entry name" value="Nucleic acid-binding proteins"/>
    <property type="match status" value="1"/>
</dbReference>
<dbReference type="HAMAP" id="MF_01588">
    <property type="entry name" value="DNA_ligase_A"/>
    <property type="match status" value="1"/>
</dbReference>
<dbReference type="InterPro" id="IPR001357">
    <property type="entry name" value="BRCT_dom"/>
</dbReference>
<dbReference type="InterPro" id="IPR036420">
    <property type="entry name" value="BRCT_dom_sf"/>
</dbReference>
<dbReference type="InterPro" id="IPR041663">
    <property type="entry name" value="DisA/LigA_HHH"/>
</dbReference>
<dbReference type="InterPro" id="IPR001679">
    <property type="entry name" value="DNA_ligase"/>
</dbReference>
<dbReference type="InterPro" id="IPR018239">
    <property type="entry name" value="DNA_ligase_AS"/>
</dbReference>
<dbReference type="InterPro" id="IPR013839">
    <property type="entry name" value="DNAligase_adenylation"/>
</dbReference>
<dbReference type="InterPro" id="IPR013840">
    <property type="entry name" value="DNAligase_N"/>
</dbReference>
<dbReference type="InterPro" id="IPR012340">
    <property type="entry name" value="NA-bd_OB-fold"/>
</dbReference>
<dbReference type="InterPro" id="IPR004150">
    <property type="entry name" value="NAD_DNA_ligase_OB"/>
</dbReference>
<dbReference type="InterPro" id="IPR010994">
    <property type="entry name" value="RuvA_2-like"/>
</dbReference>
<dbReference type="NCBIfam" id="TIGR00575">
    <property type="entry name" value="dnlj"/>
    <property type="match status" value="1"/>
</dbReference>
<dbReference type="NCBIfam" id="NF005932">
    <property type="entry name" value="PRK07956.1"/>
    <property type="match status" value="1"/>
</dbReference>
<dbReference type="PANTHER" id="PTHR23389">
    <property type="entry name" value="CHROMOSOME TRANSMISSION FIDELITY FACTOR 18"/>
    <property type="match status" value="1"/>
</dbReference>
<dbReference type="PANTHER" id="PTHR23389:SF9">
    <property type="entry name" value="DNA LIGASE"/>
    <property type="match status" value="1"/>
</dbReference>
<dbReference type="Pfam" id="PF00533">
    <property type="entry name" value="BRCT"/>
    <property type="match status" value="1"/>
</dbReference>
<dbReference type="Pfam" id="PF01653">
    <property type="entry name" value="DNA_ligase_aden"/>
    <property type="match status" value="1"/>
</dbReference>
<dbReference type="Pfam" id="PF03120">
    <property type="entry name" value="DNA_ligase_OB"/>
    <property type="match status" value="1"/>
</dbReference>
<dbReference type="Pfam" id="PF12826">
    <property type="entry name" value="HHH_2"/>
    <property type="match status" value="1"/>
</dbReference>
<dbReference type="PIRSF" id="PIRSF001604">
    <property type="entry name" value="LigA"/>
    <property type="match status" value="1"/>
</dbReference>
<dbReference type="SMART" id="SM00292">
    <property type="entry name" value="BRCT"/>
    <property type="match status" value="1"/>
</dbReference>
<dbReference type="SMART" id="SM00532">
    <property type="entry name" value="LIGANc"/>
    <property type="match status" value="1"/>
</dbReference>
<dbReference type="SUPFAM" id="SSF52113">
    <property type="entry name" value="BRCT domain"/>
    <property type="match status" value="1"/>
</dbReference>
<dbReference type="SUPFAM" id="SSF56091">
    <property type="entry name" value="DNA ligase/mRNA capping enzyme, catalytic domain"/>
    <property type="match status" value="1"/>
</dbReference>
<dbReference type="SUPFAM" id="SSF50249">
    <property type="entry name" value="Nucleic acid-binding proteins"/>
    <property type="match status" value="1"/>
</dbReference>
<dbReference type="SUPFAM" id="SSF47781">
    <property type="entry name" value="RuvA domain 2-like"/>
    <property type="match status" value="1"/>
</dbReference>
<dbReference type="PROSITE" id="PS50172">
    <property type="entry name" value="BRCT"/>
    <property type="match status" value="1"/>
</dbReference>
<dbReference type="PROSITE" id="PS01055">
    <property type="entry name" value="DNA_LIGASE_N1"/>
    <property type="match status" value="1"/>
</dbReference>
<keyword id="KW-0227">DNA damage</keyword>
<keyword id="KW-0234">DNA repair</keyword>
<keyword id="KW-0235">DNA replication</keyword>
<keyword id="KW-0436">Ligase</keyword>
<keyword id="KW-0460">Magnesium</keyword>
<keyword id="KW-0464">Manganese</keyword>
<keyword id="KW-0479">Metal-binding</keyword>
<keyword id="KW-0520">NAD</keyword>
<keyword id="KW-1185">Reference proteome</keyword>
<keyword id="KW-0862">Zinc</keyword>
<proteinExistence type="inferred from homology"/>
<protein>
    <recommendedName>
        <fullName evidence="1">DNA ligase</fullName>
        <ecNumber evidence="1">6.5.1.2</ecNumber>
    </recommendedName>
    <alternativeName>
        <fullName evidence="1">Polydeoxyribonucleotide synthase [NAD(+)]</fullName>
    </alternativeName>
</protein>
<comment type="function">
    <text evidence="1">DNA ligase that catalyzes the formation of phosphodiester linkages between 5'-phosphoryl and 3'-hydroxyl groups in double-stranded DNA using NAD as a coenzyme and as the energy source for the reaction. It is essential for DNA replication and repair of damaged DNA.</text>
</comment>
<comment type="catalytic activity">
    <reaction evidence="1">
        <text>NAD(+) + (deoxyribonucleotide)n-3'-hydroxyl + 5'-phospho-(deoxyribonucleotide)m = (deoxyribonucleotide)n+m + AMP + beta-nicotinamide D-nucleotide.</text>
        <dbReference type="EC" id="6.5.1.2"/>
    </reaction>
</comment>
<comment type="cofactor">
    <cofactor evidence="1">
        <name>Mg(2+)</name>
        <dbReference type="ChEBI" id="CHEBI:18420"/>
    </cofactor>
    <cofactor evidence="1">
        <name>Mn(2+)</name>
        <dbReference type="ChEBI" id="CHEBI:29035"/>
    </cofactor>
</comment>
<comment type="similarity">
    <text evidence="1">Belongs to the NAD-dependent DNA ligase family. LigA subfamily.</text>
</comment>
<accession>Q4FPL3</accession>
<gene>
    <name evidence="1" type="primary">ligA</name>
    <name type="ordered locus">SAR11_0016</name>
</gene>